<sequence>MAFALSLPSLPKRYQPAAIWSLYVIGLCPGLWYFYLAATGGLGFNPVKDFEHLLGIWALRFLCLGLLVTPLRDLFNVNLIAYRRALGLIAFYYVLAHFTVYLVLDRGLILGSIAGDILKRPYIMLGMAGLIILIPLALTSNRWSIRRLGSRWNTLHKLVYLVLIVGVLHFVLARKSITLEPVFYISTMVVLLGYRLVRPSIMTMKRNKRARPVRT</sequence>
<comment type="function">
    <text evidence="1">Part of the MsrPQ system that repairs oxidized periplasmic proteins containing methionine sulfoxide residues (Met-O), using respiratory chain electrons. Thus protects these proteins from oxidative-stress damage caused by reactive species of oxygen and chlorine generated by the host defense mechanisms. MsrPQ is essential for the maintenance of envelope integrity under bleach stress, rescuing a wide series of structurally unrelated periplasmic proteins from methionine oxidation. MsrQ provides electrons for reduction to the reductase catalytic subunit MsrP, using the quinone pool of the respiratory chain.</text>
</comment>
<comment type="cofactor">
    <cofactor evidence="1">
        <name>FMN</name>
        <dbReference type="ChEBI" id="CHEBI:58210"/>
    </cofactor>
    <text evidence="1">Binds 1 FMN per subunit.</text>
</comment>
<comment type="cofactor">
    <cofactor evidence="1">
        <name>heme b</name>
        <dbReference type="ChEBI" id="CHEBI:60344"/>
    </cofactor>
    <text evidence="1">Binds 1 heme b (iron(II)-protoporphyrin IX) group per subunit.</text>
</comment>
<comment type="subunit">
    <text evidence="1">Heterodimer of a catalytic subunit (MsrP) and a heme-binding subunit (MsrQ).</text>
</comment>
<comment type="subcellular location">
    <subcellularLocation>
        <location evidence="1">Cell inner membrane</location>
        <topology evidence="1">Multi-pass membrane protein</topology>
    </subcellularLocation>
</comment>
<comment type="similarity">
    <text evidence="1">Belongs to the MsrQ family.</text>
</comment>
<reference key="1">
    <citation type="journal article" date="2001" name="Science">
        <title>The genome of the natural genetic engineer Agrobacterium tumefaciens C58.</title>
        <authorList>
            <person name="Wood D.W."/>
            <person name="Setubal J.C."/>
            <person name="Kaul R."/>
            <person name="Monks D.E."/>
            <person name="Kitajima J.P."/>
            <person name="Okura V.K."/>
            <person name="Zhou Y."/>
            <person name="Chen L."/>
            <person name="Wood G.E."/>
            <person name="Almeida N.F. Jr."/>
            <person name="Woo L."/>
            <person name="Chen Y."/>
            <person name="Paulsen I.T."/>
            <person name="Eisen J.A."/>
            <person name="Karp P.D."/>
            <person name="Bovee D. Sr."/>
            <person name="Chapman P."/>
            <person name="Clendenning J."/>
            <person name="Deatherage G."/>
            <person name="Gillet W."/>
            <person name="Grant C."/>
            <person name="Kutyavin T."/>
            <person name="Levy R."/>
            <person name="Li M.-J."/>
            <person name="McClelland E."/>
            <person name="Palmieri A."/>
            <person name="Raymond C."/>
            <person name="Rouse G."/>
            <person name="Saenphimmachak C."/>
            <person name="Wu Z."/>
            <person name="Romero P."/>
            <person name="Gordon D."/>
            <person name="Zhang S."/>
            <person name="Yoo H."/>
            <person name="Tao Y."/>
            <person name="Biddle P."/>
            <person name="Jung M."/>
            <person name="Krespan W."/>
            <person name="Perry M."/>
            <person name="Gordon-Kamm B."/>
            <person name="Liao L."/>
            <person name="Kim S."/>
            <person name="Hendrick C."/>
            <person name="Zhao Z.-Y."/>
            <person name="Dolan M."/>
            <person name="Chumley F."/>
            <person name="Tingey S.V."/>
            <person name="Tomb J.-F."/>
            <person name="Gordon M.P."/>
            <person name="Olson M.V."/>
            <person name="Nester E.W."/>
        </authorList>
    </citation>
    <scope>NUCLEOTIDE SEQUENCE [LARGE SCALE GENOMIC DNA]</scope>
    <source>
        <strain>C58 / ATCC 33970</strain>
    </source>
</reference>
<reference key="2">
    <citation type="journal article" date="2001" name="Science">
        <title>Genome sequence of the plant pathogen and biotechnology agent Agrobacterium tumefaciens C58.</title>
        <authorList>
            <person name="Goodner B."/>
            <person name="Hinkle G."/>
            <person name="Gattung S."/>
            <person name="Miller N."/>
            <person name="Blanchard M."/>
            <person name="Qurollo B."/>
            <person name="Goldman B.S."/>
            <person name="Cao Y."/>
            <person name="Askenazi M."/>
            <person name="Halling C."/>
            <person name="Mullin L."/>
            <person name="Houmiel K."/>
            <person name="Gordon J."/>
            <person name="Vaudin M."/>
            <person name="Iartchouk O."/>
            <person name="Epp A."/>
            <person name="Liu F."/>
            <person name="Wollam C."/>
            <person name="Allinger M."/>
            <person name="Doughty D."/>
            <person name="Scott C."/>
            <person name="Lappas C."/>
            <person name="Markelz B."/>
            <person name="Flanagan C."/>
            <person name="Crowell C."/>
            <person name="Gurson J."/>
            <person name="Lomo C."/>
            <person name="Sear C."/>
            <person name="Strub G."/>
            <person name="Cielo C."/>
            <person name="Slater S."/>
        </authorList>
    </citation>
    <scope>NUCLEOTIDE SEQUENCE [LARGE SCALE GENOMIC DNA]</scope>
    <source>
        <strain>C58 / ATCC 33970</strain>
    </source>
</reference>
<proteinExistence type="inferred from homology"/>
<accession>P58769</accession>
<keyword id="KW-0997">Cell inner membrane</keyword>
<keyword id="KW-1003">Cell membrane</keyword>
<keyword id="KW-0249">Electron transport</keyword>
<keyword id="KW-0285">Flavoprotein</keyword>
<keyword id="KW-0288">FMN</keyword>
<keyword id="KW-0349">Heme</keyword>
<keyword id="KW-0408">Iron</keyword>
<keyword id="KW-0472">Membrane</keyword>
<keyword id="KW-0479">Metal-binding</keyword>
<keyword id="KW-1185">Reference proteome</keyword>
<keyword id="KW-0812">Transmembrane</keyword>
<keyword id="KW-1133">Transmembrane helix</keyword>
<keyword id="KW-0813">Transport</keyword>
<name>MSRQ_AGRFC</name>
<organism>
    <name type="scientific">Agrobacterium fabrum (strain C58 / ATCC 33970)</name>
    <name type="common">Agrobacterium tumefaciens (strain C58)</name>
    <dbReference type="NCBI Taxonomy" id="176299"/>
    <lineage>
        <taxon>Bacteria</taxon>
        <taxon>Pseudomonadati</taxon>
        <taxon>Pseudomonadota</taxon>
        <taxon>Alphaproteobacteria</taxon>
        <taxon>Hyphomicrobiales</taxon>
        <taxon>Rhizobiaceae</taxon>
        <taxon>Rhizobium/Agrobacterium group</taxon>
        <taxon>Agrobacterium</taxon>
        <taxon>Agrobacterium tumefaciens complex</taxon>
    </lineage>
</organism>
<gene>
    <name evidence="1" type="primary">msrQ</name>
    <name type="ordered locus">Atu1920</name>
    <name type="ORF">AGR_C_3512</name>
</gene>
<evidence type="ECO:0000255" key="1">
    <source>
        <dbReference type="HAMAP-Rule" id="MF_01207"/>
    </source>
</evidence>
<protein>
    <recommendedName>
        <fullName evidence="1">Protein-methionine-sulfoxide reductase heme-binding subunit MsrQ</fullName>
    </recommendedName>
    <alternativeName>
        <fullName evidence="1">Flavocytochrome MsrQ</fullName>
    </alternativeName>
</protein>
<dbReference type="EMBL" id="AE007869">
    <property type="protein sequence ID" value="AAK87680.1"/>
    <property type="molecule type" value="Genomic_DNA"/>
</dbReference>
<dbReference type="PIR" id="AF2812">
    <property type="entry name" value="AF2812"/>
</dbReference>
<dbReference type="PIR" id="G97590">
    <property type="entry name" value="G97590"/>
</dbReference>
<dbReference type="RefSeq" id="NP_354895.1">
    <property type="nucleotide sequence ID" value="NC_003062.2"/>
</dbReference>
<dbReference type="RefSeq" id="WP_010971961.1">
    <property type="nucleotide sequence ID" value="NC_003062.2"/>
</dbReference>
<dbReference type="SMR" id="P58769"/>
<dbReference type="STRING" id="176299.Atu1920"/>
<dbReference type="EnsemblBacteria" id="AAK87680">
    <property type="protein sequence ID" value="AAK87680"/>
    <property type="gene ID" value="Atu1920"/>
</dbReference>
<dbReference type="GeneID" id="1133958"/>
<dbReference type="KEGG" id="atu:Atu1920"/>
<dbReference type="PATRIC" id="fig|176299.10.peg.1930"/>
<dbReference type="eggNOG" id="COG2717">
    <property type="taxonomic scope" value="Bacteria"/>
</dbReference>
<dbReference type="HOGENOM" id="CLU_080662_2_0_5"/>
<dbReference type="OrthoDB" id="9788328at2"/>
<dbReference type="PhylomeDB" id="P58769"/>
<dbReference type="BioCyc" id="AGRO:ATU1920-MONOMER"/>
<dbReference type="Proteomes" id="UP000000813">
    <property type="component" value="Chromosome circular"/>
</dbReference>
<dbReference type="GO" id="GO:0005886">
    <property type="term" value="C:plasma membrane"/>
    <property type="evidence" value="ECO:0007669"/>
    <property type="project" value="UniProtKB-SubCell"/>
</dbReference>
<dbReference type="GO" id="GO:0009055">
    <property type="term" value="F:electron transfer activity"/>
    <property type="evidence" value="ECO:0007669"/>
    <property type="project" value="UniProtKB-UniRule"/>
</dbReference>
<dbReference type="GO" id="GO:0010181">
    <property type="term" value="F:FMN binding"/>
    <property type="evidence" value="ECO:0007669"/>
    <property type="project" value="UniProtKB-UniRule"/>
</dbReference>
<dbReference type="GO" id="GO:0020037">
    <property type="term" value="F:heme binding"/>
    <property type="evidence" value="ECO:0007669"/>
    <property type="project" value="UniProtKB-UniRule"/>
</dbReference>
<dbReference type="GO" id="GO:0046872">
    <property type="term" value="F:metal ion binding"/>
    <property type="evidence" value="ECO:0007669"/>
    <property type="project" value="UniProtKB-KW"/>
</dbReference>
<dbReference type="GO" id="GO:0016679">
    <property type="term" value="F:oxidoreductase activity, acting on diphenols and related substances as donors"/>
    <property type="evidence" value="ECO:0007669"/>
    <property type="project" value="TreeGrafter"/>
</dbReference>
<dbReference type="GO" id="GO:0030091">
    <property type="term" value="P:protein repair"/>
    <property type="evidence" value="ECO:0007669"/>
    <property type="project" value="UniProtKB-UniRule"/>
</dbReference>
<dbReference type="HAMAP" id="MF_01207">
    <property type="entry name" value="MsrQ"/>
    <property type="match status" value="1"/>
</dbReference>
<dbReference type="InterPro" id="IPR013130">
    <property type="entry name" value="Fe3_Rdtase_TM_dom"/>
</dbReference>
<dbReference type="InterPro" id="IPR022837">
    <property type="entry name" value="MsrQ-like"/>
</dbReference>
<dbReference type="NCBIfam" id="NF003833">
    <property type="entry name" value="PRK05419.1-5"/>
    <property type="match status" value="1"/>
</dbReference>
<dbReference type="PANTHER" id="PTHR36964">
    <property type="entry name" value="PROTEIN-METHIONINE-SULFOXIDE REDUCTASE HEME-BINDING SUBUNIT MSRQ"/>
    <property type="match status" value="1"/>
</dbReference>
<dbReference type="PANTHER" id="PTHR36964:SF1">
    <property type="entry name" value="PROTEIN-METHIONINE-SULFOXIDE REDUCTASE HEME-BINDING SUBUNIT MSRQ"/>
    <property type="match status" value="1"/>
</dbReference>
<dbReference type="Pfam" id="PF01794">
    <property type="entry name" value="Ferric_reduct"/>
    <property type="match status" value="1"/>
</dbReference>
<feature type="chain" id="PRO_0000091566" description="Protein-methionine-sulfoxide reductase heme-binding subunit MsrQ">
    <location>
        <begin position="1"/>
        <end position="215"/>
    </location>
</feature>
<feature type="transmembrane region" description="Helical" evidence="1">
    <location>
        <begin position="17"/>
        <end position="37"/>
    </location>
</feature>
<feature type="transmembrane region" description="Helical" evidence="1">
    <location>
        <begin position="50"/>
        <end position="70"/>
    </location>
</feature>
<feature type="transmembrane region" description="Helical" evidence="1">
    <location>
        <begin position="85"/>
        <end position="105"/>
    </location>
</feature>
<feature type="transmembrane region" description="Helical" evidence="1">
    <location>
        <begin position="121"/>
        <end position="141"/>
    </location>
</feature>
<feature type="transmembrane region" description="Helical" evidence="1">
    <location>
        <begin position="152"/>
        <end position="172"/>
    </location>
</feature>
<feature type="transmembrane region" description="Helical" evidence="1">
    <location>
        <begin position="177"/>
        <end position="197"/>
    </location>
</feature>